<name>SURE_METJA</name>
<proteinExistence type="inferred from homology"/>
<keyword id="KW-0963">Cytoplasm</keyword>
<keyword id="KW-0378">Hydrolase</keyword>
<keyword id="KW-0479">Metal-binding</keyword>
<keyword id="KW-0547">Nucleotide-binding</keyword>
<keyword id="KW-1185">Reference proteome</keyword>
<protein>
    <recommendedName>
        <fullName evidence="1">5'-nucleotidase SurE</fullName>
        <ecNumber evidence="1">3.1.3.5</ecNumber>
    </recommendedName>
    <alternativeName>
        <fullName evidence="1">Nucleoside 5'-monophosphate phosphohydrolase</fullName>
    </alternativeName>
</protein>
<feature type="chain" id="PRO_0000111864" description="5'-nucleotidase SurE">
    <location>
        <begin position="1"/>
        <end position="266"/>
    </location>
</feature>
<feature type="binding site" evidence="1">
    <location>
        <position position="8"/>
    </location>
    <ligand>
        <name>a divalent metal cation</name>
        <dbReference type="ChEBI" id="CHEBI:60240"/>
    </ligand>
</feature>
<feature type="binding site" evidence="1">
    <location>
        <position position="9"/>
    </location>
    <ligand>
        <name>a divalent metal cation</name>
        <dbReference type="ChEBI" id="CHEBI:60240"/>
    </ligand>
</feature>
<feature type="binding site" evidence="1">
    <location>
        <position position="42"/>
    </location>
    <ligand>
        <name>a divalent metal cation</name>
        <dbReference type="ChEBI" id="CHEBI:60240"/>
    </ligand>
</feature>
<feature type="binding site" evidence="1">
    <location>
        <position position="98"/>
    </location>
    <ligand>
        <name>a divalent metal cation</name>
        <dbReference type="ChEBI" id="CHEBI:60240"/>
    </ligand>
</feature>
<sequence>MEILIVNDDGIYSPSLIALYNALKEKFSDANITIVAPTNQQSGIGRAISLFEPLRMTKVKLAKDIVGYAVSGTPTDCVILGIYQILKKVPDLVISGINIGENLGTEIMTSGTLGAAFEAAHHGAKSIASSLQITSDHLKFKELDIPINFEIPAKITAKIAEKYLDYDMPCDVLNINIPENATLETPIEITRLARKMYTTHVEERIDPRGRSYYWIDGYPIFEEEEDTDVYVLRKKRHISITPLTLDTTIKNLDEFKEKYGKILCEM</sequence>
<organism>
    <name type="scientific">Methanocaldococcus jannaschii (strain ATCC 43067 / DSM 2661 / JAL-1 / JCM 10045 / NBRC 100440)</name>
    <name type="common">Methanococcus jannaschii</name>
    <dbReference type="NCBI Taxonomy" id="243232"/>
    <lineage>
        <taxon>Archaea</taxon>
        <taxon>Methanobacteriati</taxon>
        <taxon>Methanobacteriota</taxon>
        <taxon>Methanomada group</taxon>
        <taxon>Methanococci</taxon>
        <taxon>Methanococcales</taxon>
        <taxon>Methanocaldococcaceae</taxon>
        <taxon>Methanocaldococcus</taxon>
    </lineage>
</organism>
<gene>
    <name evidence="1" type="primary">surE</name>
    <name type="ordered locus">MJ0559</name>
</gene>
<dbReference type="EC" id="3.1.3.5" evidence="1"/>
<dbReference type="EMBL" id="L77117">
    <property type="protein sequence ID" value="AAB98553.1"/>
    <property type="status" value="ALT_INIT"/>
    <property type="molecule type" value="Genomic_DNA"/>
</dbReference>
<dbReference type="PIR" id="G64369">
    <property type="entry name" value="G64369"/>
</dbReference>
<dbReference type="RefSeq" id="WP_064496542.1">
    <property type="nucleotide sequence ID" value="NC_000909.1"/>
</dbReference>
<dbReference type="SMR" id="Q57979"/>
<dbReference type="FunCoup" id="Q57979">
    <property type="interactions" value="34"/>
</dbReference>
<dbReference type="STRING" id="243232.MJ_0559"/>
<dbReference type="PaxDb" id="243232-MJ_0559"/>
<dbReference type="EnsemblBacteria" id="AAB98553">
    <property type="protein sequence ID" value="AAB98553"/>
    <property type="gene ID" value="MJ_0559"/>
</dbReference>
<dbReference type="GeneID" id="1451424"/>
<dbReference type="KEGG" id="mja:MJ_0559"/>
<dbReference type="eggNOG" id="arCOG02303">
    <property type="taxonomic scope" value="Archaea"/>
</dbReference>
<dbReference type="HOGENOM" id="CLU_045192_1_3_2"/>
<dbReference type="InParanoid" id="Q57979"/>
<dbReference type="OrthoDB" id="26873at2157"/>
<dbReference type="PhylomeDB" id="Q57979"/>
<dbReference type="Proteomes" id="UP000000805">
    <property type="component" value="Chromosome"/>
</dbReference>
<dbReference type="GO" id="GO:0005737">
    <property type="term" value="C:cytoplasm"/>
    <property type="evidence" value="ECO:0007669"/>
    <property type="project" value="UniProtKB-SubCell"/>
</dbReference>
<dbReference type="GO" id="GO:0008253">
    <property type="term" value="F:5'-nucleotidase activity"/>
    <property type="evidence" value="ECO:0007669"/>
    <property type="project" value="UniProtKB-UniRule"/>
</dbReference>
<dbReference type="GO" id="GO:0046872">
    <property type="term" value="F:metal ion binding"/>
    <property type="evidence" value="ECO:0007669"/>
    <property type="project" value="UniProtKB-UniRule"/>
</dbReference>
<dbReference type="GO" id="GO:0000166">
    <property type="term" value="F:nucleotide binding"/>
    <property type="evidence" value="ECO:0007669"/>
    <property type="project" value="UniProtKB-KW"/>
</dbReference>
<dbReference type="Gene3D" id="3.40.1210.10">
    <property type="entry name" value="Survival protein SurE-like phosphatase/nucleotidase"/>
    <property type="match status" value="1"/>
</dbReference>
<dbReference type="HAMAP" id="MF_00060">
    <property type="entry name" value="SurE"/>
    <property type="match status" value="1"/>
</dbReference>
<dbReference type="InterPro" id="IPR030048">
    <property type="entry name" value="SurE"/>
</dbReference>
<dbReference type="InterPro" id="IPR002828">
    <property type="entry name" value="SurE-like_Pase/nucleotidase"/>
</dbReference>
<dbReference type="InterPro" id="IPR036523">
    <property type="entry name" value="SurE-like_sf"/>
</dbReference>
<dbReference type="NCBIfam" id="NF001491">
    <property type="entry name" value="PRK00346.2-1"/>
    <property type="match status" value="1"/>
</dbReference>
<dbReference type="NCBIfam" id="TIGR00087">
    <property type="entry name" value="surE"/>
    <property type="match status" value="1"/>
</dbReference>
<dbReference type="PANTHER" id="PTHR30457">
    <property type="entry name" value="5'-NUCLEOTIDASE SURE"/>
    <property type="match status" value="1"/>
</dbReference>
<dbReference type="PANTHER" id="PTHR30457:SF0">
    <property type="entry name" value="PHOSPHATASE, PUTATIVE (AFU_ORTHOLOGUE AFUA_4G01070)-RELATED"/>
    <property type="match status" value="1"/>
</dbReference>
<dbReference type="Pfam" id="PF01975">
    <property type="entry name" value="SurE"/>
    <property type="match status" value="1"/>
</dbReference>
<dbReference type="SUPFAM" id="SSF64167">
    <property type="entry name" value="SurE-like"/>
    <property type="match status" value="1"/>
</dbReference>
<comment type="function">
    <text evidence="1">Nucleotidase that shows phosphatase activity on nucleoside 5'-monophosphates.</text>
</comment>
<comment type="catalytic activity">
    <reaction evidence="1">
        <text>a ribonucleoside 5'-phosphate + H2O = a ribonucleoside + phosphate</text>
        <dbReference type="Rhea" id="RHEA:12484"/>
        <dbReference type="ChEBI" id="CHEBI:15377"/>
        <dbReference type="ChEBI" id="CHEBI:18254"/>
        <dbReference type="ChEBI" id="CHEBI:43474"/>
        <dbReference type="ChEBI" id="CHEBI:58043"/>
        <dbReference type="EC" id="3.1.3.5"/>
    </reaction>
</comment>
<comment type="cofactor">
    <cofactor evidence="1">
        <name>a divalent metal cation</name>
        <dbReference type="ChEBI" id="CHEBI:60240"/>
    </cofactor>
    <text evidence="1">Binds 1 divalent metal cation per subunit.</text>
</comment>
<comment type="subcellular location">
    <subcellularLocation>
        <location evidence="1">Cytoplasm</location>
    </subcellularLocation>
</comment>
<comment type="similarity">
    <text evidence="1">Belongs to the SurE nucleotidase family.</text>
</comment>
<comment type="sequence caution" evidence="2">
    <conflict type="erroneous initiation">
        <sequence resource="EMBL-CDS" id="AAB98553"/>
    </conflict>
</comment>
<evidence type="ECO:0000255" key="1">
    <source>
        <dbReference type="HAMAP-Rule" id="MF_00060"/>
    </source>
</evidence>
<evidence type="ECO:0000305" key="2"/>
<reference key="1">
    <citation type="journal article" date="1996" name="Science">
        <title>Complete genome sequence of the methanogenic archaeon, Methanococcus jannaschii.</title>
        <authorList>
            <person name="Bult C.J."/>
            <person name="White O."/>
            <person name="Olsen G.J."/>
            <person name="Zhou L."/>
            <person name="Fleischmann R.D."/>
            <person name="Sutton G.G."/>
            <person name="Blake J.A."/>
            <person name="FitzGerald L.M."/>
            <person name="Clayton R.A."/>
            <person name="Gocayne J.D."/>
            <person name="Kerlavage A.R."/>
            <person name="Dougherty B.A."/>
            <person name="Tomb J.-F."/>
            <person name="Adams M.D."/>
            <person name="Reich C.I."/>
            <person name="Overbeek R."/>
            <person name="Kirkness E.F."/>
            <person name="Weinstock K.G."/>
            <person name="Merrick J.M."/>
            <person name="Glodek A."/>
            <person name="Scott J.L."/>
            <person name="Geoghagen N.S.M."/>
            <person name="Weidman J.F."/>
            <person name="Fuhrmann J.L."/>
            <person name="Nguyen D."/>
            <person name="Utterback T.R."/>
            <person name="Kelley J.M."/>
            <person name="Peterson J.D."/>
            <person name="Sadow P.W."/>
            <person name="Hanna M.C."/>
            <person name="Cotton M.D."/>
            <person name="Roberts K.M."/>
            <person name="Hurst M.A."/>
            <person name="Kaine B.P."/>
            <person name="Borodovsky M."/>
            <person name="Klenk H.-P."/>
            <person name="Fraser C.M."/>
            <person name="Smith H.O."/>
            <person name="Woese C.R."/>
            <person name="Venter J.C."/>
        </authorList>
    </citation>
    <scope>NUCLEOTIDE SEQUENCE [LARGE SCALE GENOMIC DNA]</scope>
    <source>
        <strain>ATCC 43067 / DSM 2661 / JAL-1 / JCM 10045 / NBRC 100440</strain>
    </source>
</reference>
<accession>Q57979</accession>